<reference key="1">
    <citation type="journal article" date="1989" name="J. Virol.">
        <title>Nucleotide sequence of the human polyomavirus AS virus, an antigenic variant of BK virus.</title>
        <authorList>
            <person name="Tavis J.E."/>
            <person name="Walker D.L."/>
            <person name="Gardner S.D."/>
            <person name="Frisque R.J."/>
        </authorList>
    </citation>
    <scope>NUCLEOTIDE SEQUENCE [GENOMIC DNA]</scope>
</reference>
<reference key="2">
    <citation type="journal article" date="2009" name="Virology">
        <title>The Polyomaviridae: Contributions of virus structure to our understanding of virus receptors and infectious entry.</title>
        <authorList>
            <person name="Neu U."/>
            <person name="Stehle T."/>
            <person name="Atwood W.J."/>
        </authorList>
    </citation>
    <scope>REVIEW</scope>
</reference>
<name>VP1_POVBA</name>
<organism>
    <name type="scientific">BK polyomavirus (strain AS)</name>
    <name type="common">BKPyV</name>
    <dbReference type="NCBI Taxonomy" id="10631"/>
    <lineage>
        <taxon>Viruses</taxon>
        <taxon>Monodnaviria</taxon>
        <taxon>Shotokuvirae</taxon>
        <taxon>Cossaviricota</taxon>
        <taxon>Papovaviricetes</taxon>
        <taxon>Sepolyvirales</taxon>
        <taxon>Polyomaviridae</taxon>
        <taxon>Betapolyomavirus</taxon>
        <taxon>BK polyomavirus</taxon>
    </lineage>
</organism>
<evidence type="ECO:0000250" key="1"/>
<evidence type="ECO:0000250" key="2">
    <source>
        <dbReference type="UniProtKB" id="P03087"/>
    </source>
</evidence>
<evidence type="ECO:0000256" key="3">
    <source>
        <dbReference type="SAM" id="MobiDB-lite"/>
    </source>
</evidence>
<evidence type="ECO:0000305" key="4"/>
<evidence type="ECO:0000305" key="5">
    <source>
    </source>
</evidence>
<protein>
    <recommendedName>
        <fullName>Major capsid protein VP1</fullName>
    </recommendedName>
    <alternativeName>
        <fullName>Major structural protein VP1</fullName>
    </alternativeName>
</protein>
<comment type="function">
    <text evidence="2 5">Forms an icosahedral capsid with a T=7 symmetry and a 50 nm diameter. The capsid is composed of 72 pentamers linked to each other by disulfide bonds and associated with VP2 or VP3 proteins. Interacts with gangliosides GT1b and GD1b containing terminal alpha(2-8)-linked sialic acids on the cell surface to provide virion attachment to target cell. This attachment induces virion internalization predominantly through caveolin-mediated endocytosis and traffics to the endoplasmic reticulum. Inside the endoplasmic reticulum, the protein folding machinery isomerizes VP1 interpentamer disulfide bonds, thereby triggering initial uncoating. Next, the virion uses the endoplasmic reticulum-associated degradation machinery to probably translocate in the cytosol before reaching the nucleus. Nuclear entry of the viral DNA involves the selective exposure and importin recognition of VP2/Vp3 nuclear localization signal. In late phase of infection, neo-synthesized VP1 encapsulates replicated genomic DNA in the nucleus, and participates in rearranging nucleosomes around the viral DNA.</text>
</comment>
<comment type="subunit">
    <text evidence="2">Homomultimer; disulfide-linked. The virus capsid is composed of 72 icosahedral units, each one composed of five disulfide-linked copies of VP1. Interacts with minor capsid proteins VP2 and VP3.</text>
</comment>
<comment type="subcellular location">
    <subcellularLocation>
        <location>Virion</location>
    </subcellularLocation>
    <subcellularLocation>
        <location evidence="2">Host nucleus</location>
    </subcellularLocation>
</comment>
<comment type="alternative products">
    <event type="alternative splicing"/>
    <event type="alternative initiation"/>
    <isoform>
        <id>P14996-1</id>
        <name>VP1</name>
        <sequence type="displayed"/>
    </isoform>
    <isoform>
        <id>P14997-1</id>
        <name>VP2</name>
        <name>Minor capsid protein VP2</name>
        <sequence type="external"/>
    </isoform>
    <isoform>
        <id>P14997-2</id>
        <name>VP3</name>
        <name>Minor capsid protein VP3</name>
        <sequence type="external"/>
    </isoform>
    <isoform>
        <id>P14997-3</id>
        <name>VP4</name>
        <name>Viroporin VP4</name>
        <sequence type="external"/>
    </isoform>
    <isoform>
        <id>P14998-1</id>
        <name>Agno</name>
        <sequence type="external"/>
    </isoform>
</comment>
<comment type="domain">
    <text evidence="2">A DNA-binding domain overlapping a bipartite nuclear localization signal is present in the N-terminal region of the protein and is required for efficient virus formation.</text>
</comment>
<comment type="miscellaneous">
    <molecule>Isoform VP1</molecule>
    <text>Produced by alternative splicing of the late mRNA.</text>
</comment>
<comment type="similarity">
    <text evidence="4">Belongs to the polyomaviruses coat protein VP1 family.</text>
</comment>
<sequence>MAPTKRKGECPGAAPKKPKEPVQVPKLLIKGGVEVLEVKTGVDAITEVECFLNPEMGDPDDNLRGYSQHLSAENAFESDSPDRKMLPCYSTARIPLPNLNEDLTCGNLLMWEAVTVKTEVIGITSMLNLHAGSQKVHENGGGKPVQGSNFHFFAVGGDPLEMQGVLMNYRTKYPQGTITPKNPTAQSQVMNTDHKAYLDKNNAYPVECWIPDPSRNENTRYFGTYTGGENVPPVLHVTNTATTVLLDEQGVGPLCKADSLYVSAADICGLFTNSSGTQQWRGLARYFKIRLRKRSVKNPYPISFLLSDLINRRTQKVDGQPMYGMESQVEEVRVFDGTEQLPGDPDMIRYIDRQGQLQTKMV</sequence>
<dbReference type="EMBL" id="M23122">
    <property type="protein sequence ID" value="AAA46882.1"/>
    <property type="molecule type" value="Genomic_DNA"/>
</dbReference>
<dbReference type="PIR" id="D33278">
    <property type="entry name" value="VVVP1S"/>
</dbReference>
<dbReference type="SMR" id="P14996"/>
<dbReference type="Proteomes" id="UP000008166">
    <property type="component" value="Genome"/>
</dbReference>
<dbReference type="GO" id="GO:0042025">
    <property type="term" value="C:host cell nucleus"/>
    <property type="evidence" value="ECO:0007669"/>
    <property type="project" value="UniProtKB-SubCell"/>
</dbReference>
<dbReference type="GO" id="GO:0039620">
    <property type="term" value="C:T=7 icosahedral viral capsid"/>
    <property type="evidence" value="ECO:0007669"/>
    <property type="project" value="UniProtKB-KW"/>
</dbReference>
<dbReference type="GO" id="GO:0005198">
    <property type="term" value="F:structural molecule activity"/>
    <property type="evidence" value="ECO:0007669"/>
    <property type="project" value="InterPro"/>
</dbReference>
<dbReference type="GO" id="GO:0075513">
    <property type="term" value="P:caveolin-mediated endocytosis of virus by host cell"/>
    <property type="evidence" value="ECO:0007669"/>
    <property type="project" value="UniProtKB-KW"/>
</dbReference>
<dbReference type="GO" id="GO:0019062">
    <property type="term" value="P:virion attachment to host cell"/>
    <property type="evidence" value="ECO:0007669"/>
    <property type="project" value="UniProtKB-KW"/>
</dbReference>
<dbReference type="Gene3D" id="2.60.175.10">
    <property type="entry name" value="Capsid protein VP1,Polyomavirus"/>
    <property type="match status" value="1"/>
</dbReference>
<dbReference type="InterPro" id="IPR000662">
    <property type="entry name" value="Capsid_VP1_Polyomavir"/>
</dbReference>
<dbReference type="InterPro" id="IPR011222">
    <property type="entry name" value="dsDNA_vir_gr_I_capsid"/>
</dbReference>
<dbReference type="InterPro" id="IPR036931">
    <property type="entry name" value="Polyomavir_VP1_sf"/>
</dbReference>
<dbReference type="Pfam" id="PF00718">
    <property type="entry name" value="Polyoma_coat"/>
    <property type="match status" value="1"/>
</dbReference>
<dbReference type="PIRSF" id="PIRSF003376">
    <property type="entry name" value="Capsid_VP1_Polyomavir"/>
    <property type="match status" value="1"/>
</dbReference>
<dbReference type="SUPFAM" id="SSF88648">
    <property type="entry name" value="Group I dsDNA viruses"/>
    <property type="match status" value="1"/>
</dbReference>
<proteinExistence type="inferred from homology"/>
<organismHost>
    <name type="scientific">Homo sapiens</name>
    <name type="common">Human</name>
    <dbReference type="NCBI Taxonomy" id="9606"/>
</organismHost>
<feature type="chain" id="PRO_0000115017" description="Major capsid protein VP1">
    <location>
        <begin position="1"/>
        <end position="362"/>
    </location>
</feature>
<feature type="region of interest" description="Disordered" evidence="3">
    <location>
        <begin position="1"/>
        <end position="21"/>
    </location>
</feature>
<feature type="short sequence motif" description="Bipartite nuclear localization signal" evidence="2">
    <location>
        <begin position="5"/>
        <end position="19"/>
    </location>
</feature>
<feature type="modified residue" description="Phosphothreonine; by host" evidence="1">
    <location>
        <position position="338"/>
    </location>
</feature>
<feature type="disulfide bond" description="Interchain (with C-10)" evidence="1">
    <location>
        <position position="10"/>
    </location>
</feature>
<feature type="disulfide bond" description="Interchain (with C-105)" evidence="1">
    <location>
        <position position="105"/>
    </location>
</feature>
<accession>P14996</accession>
<keyword id="KW-0024">Alternative initiation</keyword>
<keyword id="KW-0025">Alternative splicing</keyword>
<keyword id="KW-0167">Capsid protein</keyword>
<keyword id="KW-1166">Caveolin-mediated endocytosis of virus by host</keyword>
<keyword id="KW-1015">Disulfide bond</keyword>
<keyword id="KW-1048">Host nucleus</keyword>
<keyword id="KW-0945">Host-virus interaction</keyword>
<keyword id="KW-0426">Late protein</keyword>
<keyword id="KW-0597">Phosphoprotein</keyword>
<keyword id="KW-1145">T=7 icosahedral capsid protein</keyword>
<keyword id="KW-1161">Viral attachment to host cell</keyword>
<keyword id="KW-1162">Viral penetration into host cytoplasm</keyword>
<keyword id="KW-0946">Virion</keyword>
<keyword id="KW-1164">Virus endocytosis by host</keyword>
<keyword id="KW-1160">Virus entry into host cell</keyword>